<feature type="chain" id="PRO_0000416510" description="SAP domain-containing new25">
    <location>
        <begin position="1"/>
        <end position="89"/>
    </location>
</feature>
<feature type="domain" description="SAP">
    <location>
        <begin position="44"/>
        <end position="78"/>
    </location>
</feature>
<name>NEW25_SCHPO</name>
<reference key="1">
    <citation type="journal article" date="2002" name="Nature">
        <title>The genome sequence of Schizosaccharomyces pombe.</title>
        <authorList>
            <person name="Wood V."/>
            <person name="Gwilliam R."/>
            <person name="Rajandream M.A."/>
            <person name="Lyne M.H."/>
            <person name="Lyne R."/>
            <person name="Stewart A."/>
            <person name="Sgouros J.G."/>
            <person name="Peat N."/>
            <person name="Hayles J."/>
            <person name="Baker S.G."/>
            <person name="Basham D."/>
            <person name="Bowman S."/>
            <person name="Brooks K."/>
            <person name="Brown D."/>
            <person name="Brown S."/>
            <person name="Chillingworth T."/>
            <person name="Churcher C.M."/>
            <person name="Collins M."/>
            <person name="Connor R."/>
            <person name="Cronin A."/>
            <person name="Davis P."/>
            <person name="Feltwell T."/>
            <person name="Fraser A."/>
            <person name="Gentles S."/>
            <person name="Goble A."/>
            <person name="Hamlin N."/>
            <person name="Harris D.E."/>
            <person name="Hidalgo J."/>
            <person name="Hodgson G."/>
            <person name="Holroyd S."/>
            <person name="Hornsby T."/>
            <person name="Howarth S."/>
            <person name="Huckle E.J."/>
            <person name="Hunt S."/>
            <person name="Jagels K."/>
            <person name="James K.D."/>
            <person name="Jones L."/>
            <person name="Jones M."/>
            <person name="Leather S."/>
            <person name="McDonald S."/>
            <person name="McLean J."/>
            <person name="Mooney P."/>
            <person name="Moule S."/>
            <person name="Mungall K.L."/>
            <person name="Murphy L.D."/>
            <person name="Niblett D."/>
            <person name="Odell C."/>
            <person name="Oliver K."/>
            <person name="O'Neil S."/>
            <person name="Pearson D."/>
            <person name="Quail M.A."/>
            <person name="Rabbinowitsch E."/>
            <person name="Rutherford K.M."/>
            <person name="Rutter S."/>
            <person name="Saunders D."/>
            <person name="Seeger K."/>
            <person name="Sharp S."/>
            <person name="Skelton J."/>
            <person name="Simmonds M.N."/>
            <person name="Squares R."/>
            <person name="Squares S."/>
            <person name="Stevens K."/>
            <person name="Taylor K."/>
            <person name="Taylor R.G."/>
            <person name="Tivey A."/>
            <person name="Walsh S.V."/>
            <person name="Warren T."/>
            <person name="Whitehead S."/>
            <person name="Woodward J.R."/>
            <person name="Volckaert G."/>
            <person name="Aert R."/>
            <person name="Robben J."/>
            <person name="Grymonprez B."/>
            <person name="Weltjens I."/>
            <person name="Vanstreels E."/>
            <person name="Rieger M."/>
            <person name="Schaefer M."/>
            <person name="Mueller-Auer S."/>
            <person name="Gabel C."/>
            <person name="Fuchs M."/>
            <person name="Duesterhoeft A."/>
            <person name="Fritzc C."/>
            <person name="Holzer E."/>
            <person name="Moestl D."/>
            <person name="Hilbert H."/>
            <person name="Borzym K."/>
            <person name="Langer I."/>
            <person name="Beck A."/>
            <person name="Lehrach H."/>
            <person name="Reinhardt R."/>
            <person name="Pohl T.M."/>
            <person name="Eger P."/>
            <person name="Zimmermann W."/>
            <person name="Wedler H."/>
            <person name="Wambutt R."/>
            <person name="Purnelle B."/>
            <person name="Goffeau A."/>
            <person name="Cadieu E."/>
            <person name="Dreano S."/>
            <person name="Gloux S."/>
            <person name="Lelaure V."/>
            <person name="Mottier S."/>
            <person name="Galibert F."/>
            <person name="Aves S.J."/>
            <person name="Xiang Z."/>
            <person name="Hunt C."/>
            <person name="Moore K."/>
            <person name="Hurst S.M."/>
            <person name="Lucas M."/>
            <person name="Rochet M."/>
            <person name="Gaillardin C."/>
            <person name="Tallada V.A."/>
            <person name="Garzon A."/>
            <person name="Thode G."/>
            <person name="Daga R.R."/>
            <person name="Cruzado L."/>
            <person name="Jimenez J."/>
            <person name="Sanchez M."/>
            <person name="del Rey F."/>
            <person name="Benito J."/>
            <person name="Dominguez A."/>
            <person name="Revuelta J.L."/>
            <person name="Moreno S."/>
            <person name="Armstrong J."/>
            <person name="Forsburg S.L."/>
            <person name="Cerutti L."/>
            <person name="Lowe T."/>
            <person name="McCombie W.R."/>
            <person name="Paulsen I."/>
            <person name="Potashkin J."/>
            <person name="Shpakovski G.V."/>
            <person name="Ussery D."/>
            <person name="Barrell B.G."/>
            <person name="Nurse P."/>
        </authorList>
    </citation>
    <scope>NUCLEOTIDE SEQUENCE [LARGE SCALE GENOMIC DNA]</scope>
    <source>
        <strain>972 / ATCC 24843</strain>
    </source>
</reference>
<reference key="2">
    <citation type="journal article" date="2011" name="Genetics">
        <title>Augmented annotation of the Schizosaccharomyces pombe genome reveals additional genes required for growth and viability.</title>
        <authorList>
            <person name="Bitton D.A."/>
            <person name="Wood V."/>
            <person name="Scutt P.J."/>
            <person name="Grallert A."/>
            <person name="Yates T."/>
            <person name="Smith D.L."/>
            <person name="Hagan I.M."/>
            <person name="Miller C.J."/>
        </authorList>
    </citation>
    <scope>IDENTIFICATION</scope>
</reference>
<proteinExistence type="evidence at transcript level"/>
<accession>G2TRT4</accession>
<gene>
    <name type="primary">new25</name>
    <name type="ORF">SPCC330.21</name>
</gene>
<sequence>MKIANVLTLSFAAIIAASSLAVVVSPITDNSRETASSSISQSPPSQWSKKQLIEYCKKNSLKTSGSHEELVIRVQNHLRTASKKVDARP</sequence>
<keyword id="KW-1185">Reference proteome</keyword>
<dbReference type="EMBL" id="CU329672">
    <property type="protein sequence ID" value="CCD31388.1"/>
    <property type="molecule type" value="Genomic_DNA"/>
</dbReference>
<dbReference type="RefSeq" id="XP_004001738.1">
    <property type="nucleotide sequence ID" value="XM_004001689.1"/>
</dbReference>
<dbReference type="SMR" id="G2TRT4"/>
<dbReference type="STRING" id="284812.G2TRT4"/>
<dbReference type="PaxDb" id="4896-SPCC330.21.1"/>
<dbReference type="EnsemblFungi" id="SPCC330.21.1">
    <property type="protein sequence ID" value="SPCC330.21.1:pep"/>
    <property type="gene ID" value="SPCC330.21"/>
</dbReference>
<dbReference type="PomBase" id="SPCC330.21">
    <property type="gene designation" value="new25"/>
</dbReference>
<dbReference type="VEuPathDB" id="FungiDB:SPCC330.21"/>
<dbReference type="HOGENOM" id="CLU_2456042_0_0_1"/>
<dbReference type="InParanoid" id="G2TRT4"/>
<dbReference type="OMA" id="RVEQHQK"/>
<dbReference type="PRO" id="PR:G2TRT4"/>
<dbReference type="Proteomes" id="UP000002485">
    <property type="component" value="Chromosome III"/>
</dbReference>
<dbReference type="Pfam" id="PF18953">
    <property type="entry name" value="SAP_new25"/>
    <property type="match status" value="1"/>
</dbReference>
<protein>
    <recommendedName>
        <fullName>SAP domain-containing new25</fullName>
    </recommendedName>
</protein>
<organism>
    <name type="scientific">Schizosaccharomyces pombe (strain 972 / ATCC 24843)</name>
    <name type="common">Fission yeast</name>
    <dbReference type="NCBI Taxonomy" id="284812"/>
    <lineage>
        <taxon>Eukaryota</taxon>
        <taxon>Fungi</taxon>
        <taxon>Dikarya</taxon>
        <taxon>Ascomycota</taxon>
        <taxon>Taphrinomycotina</taxon>
        <taxon>Schizosaccharomycetes</taxon>
        <taxon>Schizosaccharomycetales</taxon>
        <taxon>Schizosaccharomycetaceae</taxon>
        <taxon>Schizosaccharomyces</taxon>
    </lineage>
</organism>